<gene>
    <name type="primary">sag</name>
</gene>
<accession>P03319</accession>
<accession>Q9IZS9</accession>
<protein>
    <recommendedName>
        <fullName>Protein PR73</fullName>
    </recommendedName>
    <alternativeName>
        <fullName>Superantigen</fullName>
        <shortName>Sag</shortName>
    </alternativeName>
</protein>
<sequence length="319" mass="36853">MPRLQQKWLNSRECPTPRGEAAKGLFPTKDDPSAHKRVSPSDKDIFILCCKLGIALLCLGLLGEVAVRARRALTLDSFNSSSVQDYNLNNSENSTFLLRQGPQPTSSYKPHRFCPSEIEIRMLAKNYIFTNKTNPIGRLLVTMLRNESLSFSTIFTQIQKLEMGIENRKRRSTSIEEQVQGLLTTGLEVKKGKKSVFVKIGDRWWQPGTYRGPYIYRPTDAPLPYTGRYDLNWDRWVTVNGYKVLYRSLPFRERLARARPPWCMLSQEEKDDMKQQVHDYIYLGTGMHFWGKIFHTKEGTVAGLIEHYSAKTYGMSYYE</sequence>
<comment type="function">
    <text>Superantigen.</text>
</comment>
<comment type="subcellular location">
    <subcellularLocation>
        <location evidence="3">Membrane</location>
        <topology evidence="3">Single-pass type II membrane protein</topology>
    </subcellularLocation>
</comment>
<comment type="miscellaneous">
    <text>This protein is coded in the long terminal repeat (LTR).</text>
</comment>
<comment type="similarity">
    <text evidence="3">Belongs to the mouse mammary tumor virus PR73 superantigen family.</text>
</comment>
<name>PR73_MMTVC</name>
<keyword id="KW-0325">Glycoprotein</keyword>
<keyword id="KW-0472">Membrane</keyword>
<keyword id="KW-1185">Reference proteome</keyword>
<keyword id="KW-0735">Signal-anchor</keyword>
<keyword id="KW-0766">Superantigen</keyword>
<keyword id="KW-0812">Transmembrane</keyword>
<keyword id="KW-1133">Transmembrane helix</keyword>
<organismHost>
    <name type="scientific">Mus musculus</name>
    <name type="common">Mouse</name>
    <dbReference type="NCBI Taxonomy" id="10090"/>
</organismHost>
<evidence type="ECO:0000255" key="1"/>
<evidence type="ECO:0000256" key="2">
    <source>
        <dbReference type="SAM" id="MobiDB-lite"/>
    </source>
</evidence>
<evidence type="ECO:0000305" key="3"/>
<reference key="1">
    <citation type="journal article" date="1983" name="J. Virol.">
        <title>Nucleotide sequencing of an apparent proviral copy of env mRNA defines determinants of expression of the mouse mammary tumor virus env gene.</title>
        <authorList>
            <person name="Majors J.E."/>
            <person name="Varmus H.E."/>
        </authorList>
    </citation>
    <scope>NUCLEOTIDE SEQUENCE [MRNA]</scope>
</reference>
<reference key="2">
    <citation type="journal article" date="2000" name="J. Virol.">
        <title>Genetics of mouse mammary tumor virus-induced mammary tumors: linkage of tumor induction to the gag gene.</title>
        <authorList>
            <person name="Hook L.M."/>
            <person name="Agafonova Y."/>
            <person name="Ross S.R."/>
            <person name="Turner S.J."/>
            <person name="Golovkina T.V."/>
        </authorList>
    </citation>
    <scope>NUCLEOTIDE SEQUENCE [GENOMIC DNA]</scope>
</reference>
<reference key="3">
    <citation type="journal article" date="1981" name="J. Virol.">
        <title>Regulatory and coding potential of the mouse mammary tumor virus long terminal redundancy.</title>
        <authorList>
            <person name="Donehower L.A."/>
            <person name="Huang A.L."/>
            <person name="Hager G.L."/>
        </authorList>
    </citation>
    <scope>NUCLEOTIDE SEQUENCE [MRNA] OF 122-319</scope>
</reference>
<organism>
    <name type="scientific">Mouse mammary tumor virus (strain C3H)</name>
    <name type="common">MMTV</name>
    <dbReference type="NCBI Taxonomy" id="11759"/>
    <lineage>
        <taxon>Viruses</taxon>
        <taxon>Riboviria</taxon>
        <taxon>Pararnavirae</taxon>
        <taxon>Artverviricota</taxon>
        <taxon>Revtraviricetes</taxon>
        <taxon>Ortervirales</taxon>
        <taxon>Retroviridae</taxon>
        <taxon>Orthoretrovirinae</taxon>
        <taxon>Betaretrovirus</taxon>
        <taxon>Mouse mammary tumor virus</taxon>
    </lineage>
</organism>
<proteinExistence type="evidence at transcript level"/>
<feature type="chain" id="PRO_0000125501" description="Protein PR73">
    <location>
        <begin position="1"/>
        <end position="319"/>
    </location>
</feature>
<feature type="topological domain" description="Cytoplasmic" evidence="1">
    <location>
        <begin position="1"/>
        <end position="44"/>
    </location>
</feature>
<feature type="transmembrane region" description="Helical" evidence="1">
    <location>
        <begin position="45"/>
        <end position="65"/>
    </location>
</feature>
<feature type="topological domain" description="Extracellular" evidence="1">
    <location>
        <begin position="66"/>
        <end position="319"/>
    </location>
</feature>
<feature type="region of interest" description="Disordered" evidence="2">
    <location>
        <begin position="1"/>
        <end position="39"/>
    </location>
</feature>
<feature type="compositionally biased region" description="Basic and acidic residues" evidence="2">
    <location>
        <begin position="28"/>
        <end position="39"/>
    </location>
</feature>
<feature type="glycosylation site" description="N-linked (GlcNAc...) asparagine; by host" evidence="1">
    <location>
        <position position="79"/>
    </location>
</feature>
<feature type="glycosylation site" description="N-linked (GlcNAc...) asparagine; by host" evidence="1">
    <location>
        <position position="89"/>
    </location>
</feature>
<feature type="glycosylation site" description="N-linked (GlcNAc...) asparagine; by host" evidence="1">
    <location>
        <position position="93"/>
    </location>
</feature>
<feature type="glycosylation site" description="N-linked (GlcNAc...) asparagine; by host" evidence="1">
    <location>
        <position position="131"/>
    </location>
</feature>
<feature type="glycosylation site" description="N-linked (GlcNAc...) asparagine; by host" evidence="1">
    <location>
        <position position="146"/>
    </location>
</feature>
<feature type="sequence conflict" description="In Ref. 2; AAF31476." evidence="3" ref="2">
    <original>V</original>
    <variation>M</variation>
    <location>
        <position position="38"/>
    </location>
</feature>
<feature type="sequence conflict" description="In Ref. 2; AAF31476." evidence="3" ref="2">
    <original>LGL</original>
    <variation>WGP</variation>
    <location>
        <begin position="59"/>
        <end position="61"/>
    </location>
</feature>
<feature type="sequence conflict" description="In Ref. 3; no nucleotide entry." evidence="3" ref="3">
    <original>P</original>
    <variation>L</variation>
    <location>
        <position position="207"/>
    </location>
</feature>
<feature type="sequence conflict" description="In Ref. 3; no nucleotide entry." evidence="3" ref="3">
    <original>A</original>
    <variation>P</variation>
    <location>
        <position position="310"/>
    </location>
</feature>
<dbReference type="EMBL" id="K00556">
    <property type="status" value="NOT_ANNOTATED_CDS"/>
    <property type="molecule type" value="mRNA"/>
</dbReference>
<dbReference type="EMBL" id="AF228552">
    <property type="protein sequence ID" value="AAF31476.1"/>
    <property type="molecule type" value="Genomic_DNA"/>
</dbReference>
<dbReference type="PIR" id="S26389">
    <property type="entry name" value="QQMVTM"/>
</dbReference>
<dbReference type="SMR" id="P03319"/>
<dbReference type="GlyCosmos" id="P03319">
    <property type="glycosylation" value="5 sites, No reported glycans"/>
</dbReference>
<dbReference type="Proteomes" id="UP000006540">
    <property type="component" value="Genome"/>
</dbReference>
<dbReference type="GO" id="GO:0016020">
    <property type="term" value="C:membrane"/>
    <property type="evidence" value="ECO:0007669"/>
    <property type="project" value="UniProtKB-SubCell"/>
</dbReference>
<dbReference type="InterPro" id="IPR001213">
    <property type="entry name" value="MMTV_SAg"/>
</dbReference>
<dbReference type="Pfam" id="PF01054">
    <property type="entry name" value="MMTV_SAg"/>
    <property type="match status" value="1"/>
</dbReference>